<sequence length="656" mass="70578">MSKPLLEVSACYRSFQAGEQQLTVLKDINLSIARGEMVAIVGASGSGKSTLMNILGCLDKPSKGSYFIDGQDTSQMDVDELAKLRREHFGFIFQRYHLLGDLNAVGNVEVPAVYAGKDRLERRERAESLLSRLGLGERLDHKPNQLSGGQQQRVSVARALMNGGDVILADEPTGALDSHSGEEMMRLLQELHREGQTIIIVTHDMHVAQHADRIIEIKDGVIISDEPNPASNIAAAPKTEVIPAKTKARARVAAWDRYAEALKMALLAMSTHRLRTFLTMLGIIIGIASVVSVVALGEGSQREILKSISSMGTNTIDIRPGSGFGDRRSARVRTLTASDANALKNLPYVDSVTPSIGSSATVRYGNKAVTATVNGVGPEFFRVRGYELAQGQFWDDDSVNALAQDAVIDENTRKQLFPNSSGAMNSAIGEVIFLGDLPVRIIGVTQPKESAFGNSDALNVWVPYTTVSGRMVGKKYLDGITVRLDESVPSNAAEQGIISLLKMRHGTQDFFTINTDTIRQNIEKTTATMTLLISAIAVISLVVGGIGVMNIMLVSVTERTREIGVRMAVGARQSDILRQFLIEAVLVCLCGGALGVALAYLIGVVFAQAGGSFQMIYSTTSIVAAFACSTLIGVLFGFLPARNAARLDPVDALARE</sequence>
<comment type="function">
    <text evidence="1">Part of the tripartite efflux system MacAB-TolC. MacB is a non-canonical ABC transporter that contains transmembrane domains (TMD), which form a pore in the inner membrane, and an ATP-binding domain (NBD), which is responsible for energy generation. Confers resistance against macrolides.</text>
</comment>
<comment type="subunit">
    <text evidence="1">Homodimer. Part of the tripartite efflux system MacAB-TolC, which is composed of an inner membrane transporter, MacB, a periplasmic membrane fusion protein, MacA, and an outer membrane component, TolC. The complex forms a large protein conduit and can translocate molecules across both the inner and outer membranes. Interacts with MacA.</text>
</comment>
<comment type="subcellular location">
    <subcellularLocation>
        <location evidence="1">Cell inner membrane</location>
        <topology evidence="1">Multi-pass membrane protein</topology>
    </subcellularLocation>
</comment>
<comment type="similarity">
    <text evidence="1">Belongs to the ABC transporter superfamily. Macrolide exporter (TC 3.A.1.122) family.</text>
</comment>
<gene>
    <name evidence="1" type="primary">macB</name>
    <name type="ordered locus">Shewana3_3455</name>
</gene>
<accession>A0L0V9</accession>
<protein>
    <recommendedName>
        <fullName evidence="1">Macrolide export ATP-binding/permease protein MacB</fullName>
        <ecNumber evidence="1">7.6.2.-</ecNumber>
    </recommendedName>
</protein>
<evidence type="ECO:0000255" key="1">
    <source>
        <dbReference type="HAMAP-Rule" id="MF_01720"/>
    </source>
</evidence>
<reference key="1">
    <citation type="submission" date="2006-09" db="EMBL/GenBank/DDBJ databases">
        <title>Complete sequence of chromosome 1 of Shewanella sp. ANA-3.</title>
        <authorList>
            <person name="Copeland A."/>
            <person name="Lucas S."/>
            <person name="Lapidus A."/>
            <person name="Barry K."/>
            <person name="Detter J.C."/>
            <person name="Glavina del Rio T."/>
            <person name="Hammon N."/>
            <person name="Israni S."/>
            <person name="Dalin E."/>
            <person name="Tice H."/>
            <person name="Pitluck S."/>
            <person name="Chertkov O."/>
            <person name="Brettin T."/>
            <person name="Bruce D."/>
            <person name="Han C."/>
            <person name="Tapia R."/>
            <person name="Gilna P."/>
            <person name="Schmutz J."/>
            <person name="Larimer F."/>
            <person name="Land M."/>
            <person name="Hauser L."/>
            <person name="Kyrpides N."/>
            <person name="Kim E."/>
            <person name="Newman D."/>
            <person name="Salticov C."/>
            <person name="Konstantinidis K."/>
            <person name="Klappenback J."/>
            <person name="Tiedje J."/>
            <person name="Richardson P."/>
        </authorList>
    </citation>
    <scope>NUCLEOTIDE SEQUENCE [LARGE SCALE GENOMIC DNA]</scope>
    <source>
        <strain>ANA-3</strain>
    </source>
</reference>
<feature type="chain" id="PRO_0000280174" description="Macrolide export ATP-binding/permease protein MacB">
    <location>
        <begin position="1"/>
        <end position="656"/>
    </location>
</feature>
<feature type="transmembrane region" description="Helical" evidence="1">
    <location>
        <begin position="277"/>
        <end position="297"/>
    </location>
</feature>
<feature type="transmembrane region" description="Helical" evidence="1">
    <location>
        <begin position="531"/>
        <end position="551"/>
    </location>
</feature>
<feature type="transmembrane region" description="Helical" evidence="1">
    <location>
        <begin position="586"/>
        <end position="606"/>
    </location>
</feature>
<feature type="transmembrane region" description="Helical" evidence="1">
    <location>
        <begin position="621"/>
        <end position="641"/>
    </location>
</feature>
<feature type="domain" description="ABC transporter" evidence="1">
    <location>
        <begin position="6"/>
        <end position="244"/>
    </location>
</feature>
<feature type="binding site" evidence="1">
    <location>
        <begin position="42"/>
        <end position="49"/>
    </location>
    <ligand>
        <name>ATP</name>
        <dbReference type="ChEBI" id="CHEBI:30616"/>
    </ligand>
</feature>
<keyword id="KW-0046">Antibiotic resistance</keyword>
<keyword id="KW-0067">ATP-binding</keyword>
<keyword id="KW-0997">Cell inner membrane</keyword>
<keyword id="KW-1003">Cell membrane</keyword>
<keyword id="KW-0472">Membrane</keyword>
<keyword id="KW-0547">Nucleotide-binding</keyword>
<keyword id="KW-1278">Translocase</keyword>
<keyword id="KW-0812">Transmembrane</keyword>
<keyword id="KW-1133">Transmembrane helix</keyword>
<keyword id="KW-0813">Transport</keyword>
<proteinExistence type="inferred from homology"/>
<organism>
    <name type="scientific">Shewanella sp. (strain ANA-3)</name>
    <dbReference type="NCBI Taxonomy" id="94122"/>
    <lineage>
        <taxon>Bacteria</taxon>
        <taxon>Pseudomonadati</taxon>
        <taxon>Pseudomonadota</taxon>
        <taxon>Gammaproteobacteria</taxon>
        <taxon>Alteromonadales</taxon>
        <taxon>Shewanellaceae</taxon>
        <taxon>Shewanella</taxon>
    </lineage>
</organism>
<name>MACB_SHESA</name>
<dbReference type="EC" id="7.6.2.-" evidence="1"/>
<dbReference type="EMBL" id="CP000469">
    <property type="protein sequence ID" value="ABK49678.1"/>
    <property type="molecule type" value="Genomic_DNA"/>
</dbReference>
<dbReference type="RefSeq" id="WP_011718247.1">
    <property type="nucleotide sequence ID" value="NC_008577.1"/>
</dbReference>
<dbReference type="SMR" id="A0L0V9"/>
<dbReference type="STRING" id="94122.Shewana3_3455"/>
<dbReference type="KEGG" id="shn:Shewana3_3455"/>
<dbReference type="eggNOG" id="COG0577">
    <property type="taxonomic scope" value="Bacteria"/>
</dbReference>
<dbReference type="eggNOG" id="COG1136">
    <property type="taxonomic scope" value="Bacteria"/>
</dbReference>
<dbReference type="HOGENOM" id="CLU_000604_78_1_6"/>
<dbReference type="OrthoDB" id="9770036at2"/>
<dbReference type="Proteomes" id="UP000002589">
    <property type="component" value="Chromosome"/>
</dbReference>
<dbReference type="GO" id="GO:0005886">
    <property type="term" value="C:plasma membrane"/>
    <property type="evidence" value="ECO:0007669"/>
    <property type="project" value="UniProtKB-SubCell"/>
</dbReference>
<dbReference type="GO" id="GO:0005524">
    <property type="term" value="F:ATP binding"/>
    <property type="evidence" value="ECO:0007669"/>
    <property type="project" value="UniProtKB-KW"/>
</dbReference>
<dbReference type="GO" id="GO:0016887">
    <property type="term" value="F:ATP hydrolysis activity"/>
    <property type="evidence" value="ECO:0007669"/>
    <property type="project" value="InterPro"/>
</dbReference>
<dbReference type="GO" id="GO:0022857">
    <property type="term" value="F:transmembrane transporter activity"/>
    <property type="evidence" value="ECO:0007669"/>
    <property type="project" value="TreeGrafter"/>
</dbReference>
<dbReference type="GO" id="GO:0046677">
    <property type="term" value="P:response to antibiotic"/>
    <property type="evidence" value="ECO:0007669"/>
    <property type="project" value="UniProtKB-KW"/>
</dbReference>
<dbReference type="CDD" id="cd03255">
    <property type="entry name" value="ABC_MJ0796_LolCDE_FtsE"/>
    <property type="match status" value="1"/>
</dbReference>
<dbReference type="FunFam" id="3.40.50.300:FF:000032">
    <property type="entry name" value="Export ABC transporter ATP-binding protein"/>
    <property type="match status" value="1"/>
</dbReference>
<dbReference type="Gene3D" id="3.40.50.300">
    <property type="entry name" value="P-loop containing nucleotide triphosphate hydrolases"/>
    <property type="match status" value="1"/>
</dbReference>
<dbReference type="InterPro" id="IPR003593">
    <property type="entry name" value="AAA+_ATPase"/>
</dbReference>
<dbReference type="InterPro" id="IPR003838">
    <property type="entry name" value="ABC3_permease_C"/>
</dbReference>
<dbReference type="InterPro" id="IPR003439">
    <property type="entry name" value="ABC_transporter-like_ATP-bd"/>
</dbReference>
<dbReference type="InterPro" id="IPR017871">
    <property type="entry name" value="ABC_transporter-like_CS"/>
</dbReference>
<dbReference type="InterPro" id="IPR017911">
    <property type="entry name" value="MacB-like_ATP-bd"/>
</dbReference>
<dbReference type="InterPro" id="IPR025857">
    <property type="entry name" value="MacB_PCD"/>
</dbReference>
<dbReference type="InterPro" id="IPR050250">
    <property type="entry name" value="Macrolide_Exporter_MacB"/>
</dbReference>
<dbReference type="InterPro" id="IPR027417">
    <property type="entry name" value="P-loop_NTPase"/>
</dbReference>
<dbReference type="PANTHER" id="PTHR30572:SF14">
    <property type="entry name" value="MACROLIDE EXPORT ATP-BINDING_PERMEASE PROTEIN MACB"/>
    <property type="match status" value="1"/>
</dbReference>
<dbReference type="PANTHER" id="PTHR30572">
    <property type="entry name" value="MEMBRANE COMPONENT OF TRANSPORTER-RELATED"/>
    <property type="match status" value="1"/>
</dbReference>
<dbReference type="Pfam" id="PF00005">
    <property type="entry name" value="ABC_tran"/>
    <property type="match status" value="1"/>
</dbReference>
<dbReference type="Pfam" id="PF02687">
    <property type="entry name" value="FtsX"/>
    <property type="match status" value="1"/>
</dbReference>
<dbReference type="Pfam" id="PF12704">
    <property type="entry name" value="MacB_PCD"/>
    <property type="match status" value="1"/>
</dbReference>
<dbReference type="SMART" id="SM00382">
    <property type="entry name" value="AAA"/>
    <property type="match status" value="1"/>
</dbReference>
<dbReference type="SUPFAM" id="SSF52540">
    <property type="entry name" value="P-loop containing nucleoside triphosphate hydrolases"/>
    <property type="match status" value="1"/>
</dbReference>
<dbReference type="PROSITE" id="PS00211">
    <property type="entry name" value="ABC_TRANSPORTER_1"/>
    <property type="match status" value="1"/>
</dbReference>
<dbReference type="PROSITE" id="PS50893">
    <property type="entry name" value="ABC_TRANSPORTER_2"/>
    <property type="match status" value="1"/>
</dbReference>
<dbReference type="PROSITE" id="PS51267">
    <property type="entry name" value="MACB"/>
    <property type="match status" value="1"/>
</dbReference>